<feature type="initiator methionine" description="Removed" evidence="1">
    <location>
        <position position="1"/>
    </location>
</feature>
<feature type="chain" id="PRO_0000148143" description="ATP-dependent protease subunit HslV">
    <location>
        <begin position="2"/>
        <end position="176"/>
    </location>
</feature>
<feature type="active site" evidence="2">
    <location>
        <position position="2"/>
    </location>
</feature>
<feature type="binding site" evidence="2">
    <location>
        <position position="157"/>
    </location>
    <ligand>
        <name>Na(+)</name>
        <dbReference type="ChEBI" id="CHEBI:29101"/>
    </ligand>
</feature>
<feature type="binding site" evidence="2">
    <location>
        <position position="160"/>
    </location>
    <ligand>
        <name>Na(+)</name>
        <dbReference type="ChEBI" id="CHEBI:29101"/>
    </ligand>
</feature>
<feature type="binding site" evidence="2">
    <location>
        <position position="163"/>
    </location>
    <ligand>
        <name>Na(+)</name>
        <dbReference type="ChEBI" id="CHEBI:29101"/>
    </ligand>
</feature>
<dbReference type="EC" id="3.4.25.2" evidence="2"/>
<dbReference type="EMBL" id="AJ295709">
    <property type="protein sequence ID" value="CAC00719.1"/>
    <property type="molecule type" value="Genomic_DNA"/>
</dbReference>
<dbReference type="EMBL" id="AE006468">
    <property type="protein sequence ID" value="AAL22932.1"/>
    <property type="molecule type" value="Genomic_DNA"/>
</dbReference>
<dbReference type="RefSeq" id="NP_462973.1">
    <property type="nucleotide sequence ID" value="NC_003197.2"/>
</dbReference>
<dbReference type="RefSeq" id="WP_000208240.1">
    <property type="nucleotide sequence ID" value="NC_003197.2"/>
</dbReference>
<dbReference type="SMR" id="P0A271"/>
<dbReference type="STRING" id="99287.STM4092"/>
<dbReference type="MEROPS" id="T01.006"/>
<dbReference type="PaxDb" id="99287-STM4092"/>
<dbReference type="GeneID" id="1255619"/>
<dbReference type="KEGG" id="stm:STM4092"/>
<dbReference type="PATRIC" id="fig|99287.12.peg.4313"/>
<dbReference type="HOGENOM" id="CLU_093872_1_0_6"/>
<dbReference type="OMA" id="WRTDKML"/>
<dbReference type="PhylomeDB" id="P0A271"/>
<dbReference type="BioCyc" id="SENT99287:STM4092-MONOMER"/>
<dbReference type="Proteomes" id="UP000001014">
    <property type="component" value="Chromosome"/>
</dbReference>
<dbReference type="GO" id="GO:0005737">
    <property type="term" value="C:cytoplasm"/>
    <property type="evidence" value="ECO:0000318"/>
    <property type="project" value="GO_Central"/>
</dbReference>
<dbReference type="GO" id="GO:0009376">
    <property type="term" value="C:HslUV protease complex"/>
    <property type="evidence" value="ECO:0007669"/>
    <property type="project" value="UniProtKB-UniRule"/>
</dbReference>
<dbReference type="GO" id="GO:0005839">
    <property type="term" value="C:proteasome core complex"/>
    <property type="evidence" value="ECO:0007669"/>
    <property type="project" value="InterPro"/>
</dbReference>
<dbReference type="GO" id="GO:0046872">
    <property type="term" value="F:metal ion binding"/>
    <property type="evidence" value="ECO:0007669"/>
    <property type="project" value="UniProtKB-KW"/>
</dbReference>
<dbReference type="GO" id="GO:0004298">
    <property type="term" value="F:threonine-type endopeptidase activity"/>
    <property type="evidence" value="ECO:0007669"/>
    <property type="project" value="UniProtKB-KW"/>
</dbReference>
<dbReference type="GO" id="GO:0051603">
    <property type="term" value="P:proteolysis involved in protein catabolic process"/>
    <property type="evidence" value="ECO:0000318"/>
    <property type="project" value="GO_Central"/>
</dbReference>
<dbReference type="CDD" id="cd01913">
    <property type="entry name" value="protease_HslV"/>
    <property type="match status" value="1"/>
</dbReference>
<dbReference type="FunFam" id="3.60.20.10:FF:000002">
    <property type="entry name" value="ATP-dependent protease subunit HslV"/>
    <property type="match status" value="1"/>
</dbReference>
<dbReference type="Gene3D" id="3.60.20.10">
    <property type="entry name" value="Glutamine Phosphoribosylpyrophosphate, subunit 1, domain 1"/>
    <property type="match status" value="1"/>
</dbReference>
<dbReference type="HAMAP" id="MF_00248">
    <property type="entry name" value="HslV"/>
    <property type="match status" value="1"/>
</dbReference>
<dbReference type="InterPro" id="IPR022281">
    <property type="entry name" value="ATP-dep_Prtase_HsIV_su"/>
</dbReference>
<dbReference type="InterPro" id="IPR029055">
    <property type="entry name" value="Ntn_hydrolases_N"/>
</dbReference>
<dbReference type="InterPro" id="IPR001353">
    <property type="entry name" value="Proteasome_sua/b"/>
</dbReference>
<dbReference type="InterPro" id="IPR023333">
    <property type="entry name" value="Proteasome_suB-type"/>
</dbReference>
<dbReference type="NCBIfam" id="TIGR03692">
    <property type="entry name" value="ATP_dep_HslV"/>
    <property type="match status" value="1"/>
</dbReference>
<dbReference type="NCBIfam" id="NF003964">
    <property type="entry name" value="PRK05456.1"/>
    <property type="match status" value="1"/>
</dbReference>
<dbReference type="PANTHER" id="PTHR32194:SF0">
    <property type="entry name" value="ATP-DEPENDENT PROTEASE SUBUNIT HSLV"/>
    <property type="match status" value="1"/>
</dbReference>
<dbReference type="PANTHER" id="PTHR32194">
    <property type="entry name" value="METALLOPROTEASE TLDD"/>
    <property type="match status" value="1"/>
</dbReference>
<dbReference type="Pfam" id="PF00227">
    <property type="entry name" value="Proteasome"/>
    <property type="match status" value="1"/>
</dbReference>
<dbReference type="PIRSF" id="PIRSF039093">
    <property type="entry name" value="HslV"/>
    <property type="match status" value="1"/>
</dbReference>
<dbReference type="SUPFAM" id="SSF56235">
    <property type="entry name" value="N-terminal nucleophile aminohydrolases (Ntn hydrolases)"/>
    <property type="match status" value="1"/>
</dbReference>
<dbReference type="PROSITE" id="PS51476">
    <property type="entry name" value="PROTEASOME_BETA_2"/>
    <property type="match status" value="1"/>
</dbReference>
<accession>P0A271</accession>
<accession>Q9K4Q6</accession>
<comment type="function">
    <text evidence="2">Protease subunit of a proteasome-like degradation complex believed to be a general protein degrading machinery.</text>
</comment>
<comment type="catalytic activity">
    <reaction evidence="2">
        <text>ATP-dependent cleavage of peptide bonds with broad specificity.</text>
        <dbReference type="EC" id="3.4.25.2"/>
    </reaction>
</comment>
<comment type="activity regulation">
    <text evidence="2">Allosterically activated by HslU binding.</text>
</comment>
<comment type="subunit">
    <text evidence="2">A double ring-shaped homohexamer of HslV is capped on each side by a ring-shaped HslU homohexamer. The assembly of the HslU/HslV complex is dependent on binding of ATP.</text>
</comment>
<comment type="subcellular location">
    <subcellularLocation>
        <location evidence="2">Cytoplasm</location>
    </subcellularLocation>
</comment>
<comment type="induction">
    <text evidence="2">By heat shock.</text>
</comment>
<comment type="similarity">
    <text evidence="2">Belongs to the peptidase T1B family. HslV subfamily.</text>
</comment>
<proteinExistence type="inferred from homology"/>
<evidence type="ECO:0000250" key="1"/>
<evidence type="ECO:0000255" key="2">
    <source>
        <dbReference type="HAMAP-Rule" id="MF_00248"/>
    </source>
</evidence>
<name>HSLV_SALTY</name>
<keyword id="KW-0021">Allosteric enzyme</keyword>
<keyword id="KW-0963">Cytoplasm</keyword>
<keyword id="KW-0378">Hydrolase</keyword>
<keyword id="KW-0479">Metal-binding</keyword>
<keyword id="KW-0645">Protease</keyword>
<keyword id="KW-1185">Reference proteome</keyword>
<keyword id="KW-0915">Sodium</keyword>
<keyword id="KW-0346">Stress response</keyword>
<keyword id="KW-0888">Threonine protease</keyword>
<organism>
    <name type="scientific">Salmonella typhimurium (strain LT2 / SGSC1412 / ATCC 700720)</name>
    <dbReference type="NCBI Taxonomy" id="99287"/>
    <lineage>
        <taxon>Bacteria</taxon>
        <taxon>Pseudomonadati</taxon>
        <taxon>Pseudomonadota</taxon>
        <taxon>Gammaproteobacteria</taxon>
        <taxon>Enterobacterales</taxon>
        <taxon>Enterobacteriaceae</taxon>
        <taxon>Salmonella</taxon>
    </lineage>
</organism>
<protein>
    <recommendedName>
        <fullName evidence="2">ATP-dependent protease subunit HslV</fullName>
        <ecNumber evidence="2">3.4.25.2</ecNumber>
    </recommendedName>
    <alternativeName>
        <fullName evidence="2">Heat shock protein HslV</fullName>
    </alternativeName>
</protein>
<sequence>MTTIVSVRRNGHVVIAGDGQATLGNTVMKGNVKKVRRLYNDKVIAGFAGGTADAFTLFELFERKLEMHQGHLVKAAVELAKDWRTDRMLRKLEALLAVADETASLIITGNGDVVQPENDLIAIGSGGPYAQAAARALLENTELGAREIAEKALDIAGDICIYTNHFHTIEELTAKA</sequence>
<gene>
    <name evidence="2" type="primary">hslV</name>
    <name type="ordered locus">STM4092</name>
</gene>
<reference key="1">
    <citation type="thesis" date="2000" institute="National Taiwan University" country="Taiwan">
        <authorList>
            <person name="Chiang Y.L."/>
        </authorList>
    </citation>
    <scope>NUCLEOTIDE SEQUENCE [GENOMIC DNA]</scope>
</reference>
<reference key="2">
    <citation type="journal article" date="2001" name="Nature">
        <title>Complete genome sequence of Salmonella enterica serovar Typhimurium LT2.</title>
        <authorList>
            <person name="McClelland M."/>
            <person name="Sanderson K.E."/>
            <person name="Spieth J."/>
            <person name="Clifton S.W."/>
            <person name="Latreille P."/>
            <person name="Courtney L."/>
            <person name="Porwollik S."/>
            <person name="Ali J."/>
            <person name="Dante M."/>
            <person name="Du F."/>
            <person name="Hou S."/>
            <person name="Layman D."/>
            <person name="Leonard S."/>
            <person name="Nguyen C."/>
            <person name="Scott K."/>
            <person name="Holmes A."/>
            <person name="Grewal N."/>
            <person name="Mulvaney E."/>
            <person name="Ryan E."/>
            <person name="Sun H."/>
            <person name="Florea L."/>
            <person name="Miller W."/>
            <person name="Stoneking T."/>
            <person name="Nhan M."/>
            <person name="Waterston R."/>
            <person name="Wilson R.K."/>
        </authorList>
    </citation>
    <scope>NUCLEOTIDE SEQUENCE [LARGE SCALE GENOMIC DNA]</scope>
    <source>
        <strain>LT2 / SGSC1412 / ATCC 700720</strain>
    </source>
</reference>